<name>PUR9_LEPBP</name>
<reference key="1">
    <citation type="journal article" date="2008" name="PLoS ONE">
        <title>Genome sequence of the saprophyte Leptospira biflexa provides insights into the evolution of Leptospira and the pathogenesis of leptospirosis.</title>
        <authorList>
            <person name="Picardeau M."/>
            <person name="Bulach D.M."/>
            <person name="Bouchier C."/>
            <person name="Zuerner R.L."/>
            <person name="Zidane N."/>
            <person name="Wilson P.J."/>
            <person name="Creno S."/>
            <person name="Kuczek E.S."/>
            <person name="Bommezzadri S."/>
            <person name="Davis J.C."/>
            <person name="McGrath A."/>
            <person name="Johnson M.J."/>
            <person name="Boursaux-Eude C."/>
            <person name="Seemann T."/>
            <person name="Rouy Z."/>
            <person name="Coppel R.L."/>
            <person name="Rood J.I."/>
            <person name="Lajus A."/>
            <person name="Davies J.K."/>
            <person name="Medigue C."/>
            <person name="Adler B."/>
        </authorList>
    </citation>
    <scope>NUCLEOTIDE SEQUENCE [LARGE SCALE GENOMIC DNA]</scope>
    <source>
        <strain>Patoc 1 / ATCC 23582 / Paris</strain>
    </source>
</reference>
<organism>
    <name type="scientific">Leptospira biflexa serovar Patoc (strain Patoc 1 / ATCC 23582 / Paris)</name>
    <dbReference type="NCBI Taxonomy" id="456481"/>
    <lineage>
        <taxon>Bacteria</taxon>
        <taxon>Pseudomonadati</taxon>
        <taxon>Spirochaetota</taxon>
        <taxon>Spirochaetia</taxon>
        <taxon>Leptospirales</taxon>
        <taxon>Leptospiraceae</taxon>
        <taxon>Leptospira</taxon>
    </lineage>
</organism>
<dbReference type="EC" id="2.1.2.3" evidence="1"/>
<dbReference type="EC" id="3.5.4.10" evidence="1"/>
<dbReference type="EMBL" id="CP000786">
    <property type="protein sequence ID" value="ABZ97576.1"/>
    <property type="molecule type" value="Genomic_DNA"/>
</dbReference>
<dbReference type="RefSeq" id="WP_012388455.1">
    <property type="nucleotide sequence ID" value="NC_010602.1"/>
</dbReference>
<dbReference type="SMR" id="B0SQ10"/>
<dbReference type="STRING" id="456481.LEPBI_I1469"/>
<dbReference type="KEGG" id="lbi:LEPBI_I1469"/>
<dbReference type="HOGENOM" id="CLU_016316_5_2_12"/>
<dbReference type="OrthoDB" id="9802065at2"/>
<dbReference type="BioCyc" id="LBIF456481:LEPBI_RS07215-MONOMER"/>
<dbReference type="UniPathway" id="UPA00074">
    <property type="reaction ID" value="UER00133"/>
</dbReference>
<dbReference type="UniPathway" id="UPA00074">
    <property type="reaction ID" value="UER00135"/>
</dbReference>
<dbReference type="Proteomes" id="UP000001847">
    <property type="component" value="Chromosome I"/>
</dbReference>
<dbReference type="GO" id="GO:0005829">
    <property type="term" value="C:cytosol"/>
    <property type="evidence" value="ECO:0007669"/>
    <property type="project" value="TreeGrafter"/>
</dbReference>
<dbReference type="GO" id="GO:0003937">
    <property type="term" value="F:IMP cyclohydrolase activity"/>
    <property type="evidence" value="ECO:0007669"/>
    <property type="project" value="UniProtKB-UniRule"/>
</dbReference>
<dbReference type="GO" id="GO:0004643">
    <property type="term" value="F:phosphoribosylaminoimidazolecarboxamide formyltransferase activity"/>
    <property type="evidence" value="ECO:0007669"/>
    <property type="project" value="UniProtKB-UniRule"/>
</dbReference>
<dbReference type="GO" id="GO:0006189">
    <property type="term" value="P:'de novo' IMP biosynthetic process"/>
    <property type="evidence" value="ECO:0007669"/>
    <property type="project" value="UniProtKB-UniRule"/>
</dbReference>
<dbReference type="CDD" id="cd01421">
    <property type="entry name" value="IMPCH"/>
    <property type="match status" value="1"/>
</dbReference>
<dbReference type="FunFam" id="3.40.140.20:FF:000001">
    <property type="entry name" value="Bifunctional purine biosynthesis protein PurH"/>
    <property type="match status" value="1"/>
</dbReference>
<dbReference type="FunFam" id="3.40.50.1380:FF:000001">
    <property type="entry name" value="Bifunctional purine biosynthesis protein PurH"/>
    <property type="match status" value="1"/>
</dbReference>
<dbReference type="Gene3D" id="3.40.140.20">
    <property type="match status" value="2"/>
</dbReference>
<dbReference type="Gene3D" id="3.40.50.1380">
    <property type="entry name" value="Methylglyoxal synthase-like domain"/>
    <property type="match status" value="1"/>
</dbReference>
<dbReference type="HAMAP" id="MF_00139">
    <property type="entry name" value="PurH"/>
    <property type="match status" value="1"/>
</dbReference>
<dbReference type="InterPro" id="IPR024051">
    <property type="entry name" value="AICAR_Tfase_dup_dom_sf"/>
</dbReference>
<dbReference type="InterPro" id="IPR016193">
    <property type="entry name" value="Cytidine_deaminase-like"/>
</dbReference>
<dbReference type="InterPro" id="IPR011607">
    <property type="entry name" value="MGS-like_dom"/>
</dbReference>
<dbReference type="InterPro" id="IPR036914">
    <property type="entry name" value="MGS-like_dom_sf"/>
</dbReference>
<dbReference type="InterPro" id="IPR002695">
    <property type="entry name" value="PurH-like"/>
</dbReference>
<dbReference type="NCBIfam" id="NF002049">
    <property type="entry name" value="PRK00881.1"/>
    <property type="match status" value="1"/>
</dbReference>
<dbReference type="NCBIfam" id="TIGR00355">
    <property type="entry name" value="purH"/>
    <property type="match status" value="1"/>
</dbReference>
<dbReference type="PANTHER" id="PTHR11692:SF0">
    <property type="entry name" value="BIFUNCTIONAL PURINE BIOSYNTHESIS PROTEIN ATIC"/>
    <property type="match status" value="1"/>
</dbReference>
<dbReference type="PANTHER" id="PTHR11692">
    <property type="entry name" value="BIFUNCTIONAL PURINE BIOSYNTHESIS PROTEIN PURH"/>
    <property type="match status" value="1"/>
</dbReference>
<dbReference type="Pfam" id="PF01808">
    <property type="entry name" value="AICARFT_IMPCHas"/>
    <property type="match status" value="1"/>
</dbReference>
<dbReference type="Pfam" id="PF02142">
    <property type="entry name" value="MGS"/>
    <property type="match status" value="1"/>
</dbReference>
<dbReference type="PIRSF" id="PIRSF000414">
    <property type="entry name" value="AICARFT_IMPCHas"/>
    <property type="match status" value="1"/>
</dbReference>
<dbReference type="SMART" id="SM00798">
    <property type="entry name" value="AICARFT_IMPCHas"/>
    <property type="match status" value="1"/>
</dbReference>
<dbReference type="SMART" id="SM00851">
    <property type="entry name" value="MGS"/>
    <property type="match status" value="1"/>
</dbReference>
<dbReference type="SUPFAM" id="SSF53927">
    <property type="entry name" value="Cytidine deaminase-like"/>
    <property type="match status" value="1"/>
</dbReference>
<dbReference type="SUPFAM" id="SSF52335">
    <property type="entry name" value="Methylglyoxal synthase-like"/>
    <property type="match status" value="1"/>
</dbReference>
<dbReference type="PROSITE" id="PS51855">
    <property type="entry name" value="MGS"/>
    <property type="match status" value="1"/>
</dbReference>
<keyword id="KW-0378">Hydrolase</keyword>
<keyword id="KW-0511">Multifunctional enzyme</keyword>
<keyword id="KW-0658">Purine biosynthesis</keyword>
<keyword id="KW-1185">Reference proteome</keyword>
<keyword id="KW-0808">Transferase</keyword>
<gene>
    <name evidence="1" type="primary">purH</name>
    <name type="ordered locus">LEPBI_I1469</name>
</gene>
<comment type="catalytic activity">
    <reaction evidence="1">
        <text>(6R)-10-formyltetrahydrofolate + 5-amino-1-(5-phospho-beta-D-ribosyl)imidazole-4-carboxamide = 5-formamido-1-(5-phospho-D-ribosyl)imidazole-4-carboxamide + (6S)-5,6,7,8-tetrahydrofolate</text>
        <dbReference type="Rhea" id="RHEA:22192"/>
        <dbReference type="ChEBI" id="CHEBI:57453"/>
        <dbReference type="ChEBI" id="CHEBI:58467"/>
        <dbReference type="ChEBI" id="CHEBI:58475"/>
        <dbReference type="ChEBI" id="CHEBI:195366"/>
        <dbReference type="EC" id="2.1.2.3"/>
    </reaction>
</comment>
<comment type="catalytic activity">
    <reaction evidence="1">
        <text>IMP + H2O = 5-formamido-1-(5-phospho-D-ribosyl)imidazole-4-carboxamide</text>
        <dbReference type="Rhea" id="RHEA:18445"/>
        <dbReference type="ChEBI" id="CHEBI:15377"/>
        <dbReference type="ChEBI" id="CHEBI:58053"/>
        <dbReference type="ChEBI" id="CHEBI:58467"/>
        <dbReference type="EC" id="3.5.4.10"/>
    </reaction>
</comment>
<comment type="pathway">
    <text evidence="1">Purine metabolism; IMP biosynthesis via de novo pathway; 5-formamido-1-(5-phospho-D-ribosyl)imidazole-4-carboxamide from 5-amino-1-(5-phospho-D-ribosyl)imidazole-4-carboxamide (10-formyl THF route): step 1/1.</text>
</comment>
<comment type="pathway">
    <text evidence="1">Purine metabolism; IMP biosynthesis via de novo pathway; IMP from 5-formamido-1-(5-phospho-D-ribosyl)imidazole-4-carboxamide: step 1/1.</text>
</comment>
<comment type="domain">
    <text evidence="1">The IMP cyclohydrolase activity resides in the N-terminal region.</text>
</comment>
<comment type="similarity">
    <text evidence="1">Belongs to the PurH family.</text>
</comment>
<accession>B0SQ10</accession>
<sequence>MIQIKRALVSVSDKTGITEICSFLTKHGVEILSTGGTYDALSKAGIAVKKVDEFTGFPEILHGRVKTLHPKIHGGLLGDTTNPDHVKQMESNGIVPITLVIVNLYPFVKTVMKPDVTLEDAIENIDIGGPSMLRSAAKNHKNVVVLTDPKDYESFQNEFTTNNGKISRETAFGYAAKVFSETASYDSAISSYFNKRLGIKYPDKITFAFNKKQKLRYGENPHQDAAFYEPLFLKSQFEALQGKELSFNNMLDFDAAFHVASLLPKNAVSIVKHLNPCGIAFGETVLESFELARKTDPISAFGGIIGIHGRVEKESAEEITKNFVEGVIAESFSNEALEIFAKKPNIRLIPIAKFDEALDELDLRSLHHGLLIQNRDYDLITKDKLKIVSKKQPTEDDLEGLMFAWNCVKFIKSNAIVYTDQNSTLGIGAGQMSRVDSVELGAMKAQKVGLSVVGSYVGSDAFFPFRDGIDAIAKVGAKAIIQPGGSIRDEEVIQAADEHGLIMVFTGMRHFRH</sequence>
<protein>
    <recommendedName>
        <fullName evidence="1">Bifunctional purine biosynthesis protein PurH</fullName>
    </recommendedName>
    <domain>
        <recommendedName>
            <fullName evidence="1">Phosphoribosylaminoimidazolecarboxamide formyltransferase</fullName>
            <ecNumber evidence="1">2.1.2.3</ecNumber>
        </recommendedName>
        <alternativeName>
            <fullName evidence="1">AICAR transformylase</fullName>
        </alternativeName>
    </domain>
    <domain>
        <recommendedName>
            <fullName evidence="1">IMP cyclohydrolase</fullName>
            <ecNumber evidence="1">3.5.4.10</ecNumber>
        </recommendedName>
        <alternativeName>
            <fullName evidence="1">ATIC</fullName>
        </alternativeName>
        <alternativeName>
            <fullName evidence="1">IMP synthase</fullName>
        </alternativeName>
        <alternativeName>
            <fullName evidence="1">Inosinicase</fullName>
        </alternativeName>
    </domain>
</protein>
<feature type="chain" id="PRO_1000096071" description="Bifunctional purine biosynthesis protein PurH">
    <location>
        <begin position="1"/>
        <end position="513"/>
    </location>
</feature>
<feature type="domain" description="MGS-like" evidence="2">
    <location>
        <begin position="1"/>
        <end position="147"/>
    </location>
</feature>
<proteinExistence type="inferred from homology"/>
<evidence type="ECO:0000255" key="1">
    <source>
        <dbReference type="HAMAP-Rule" id="MF_00139"/>
    </source>
</evidence>
<evidence type="ECO:0000255" key="2">
    <source>
        <dbReference type="PROSITE-ProRule" id="PRU01202"/>
    </source>
</evidence>